<sequence length="430" mass="47077">MDIPVNAAKPGRRRYLTLVMIFITVVICYVDRANLAVASAHIQEEFGITKAEMGYVFSAFAWLYTLCQIPGGWFLDRVGSRVTYFIAIFGWSVATLFQGFATGLMSLIGLRAITGIFEAPAFPTNNRMVTSWFPEHERASAVGFYTSGQFVGLAFLTPLLIWIQEMLSWHWVFIVTGGIGIIWSLIWFKVYQPPRLTKGISKAELDYIRDGGGLVDGDAPVKKEARQPLTAKDWKLVFHRKLIGVYLGQFAVASTLWFFLTWFPNYLTQEKGITALKAGFMTTVPFLAAFVGVLLSGWVADLLVRKGFSLGFARKTPIICGLLISTCIMGANYTNDPMMIMCLMALAFFGNGFASITWSLVSSLAPMRLIGLTGGVFNFAGGLGGITVPLVVGYLAQGYGFAPALVYISAVALIGALSYILLVGDVKRVG</sequence>
<evidence type="ECO:0000250" key="1">
    <source>
        <dbReference type="UniProtKB" id="P0AA76"/>
    </source>
</evidence>
<evidence type="ECO:0000305" key="2"/>
<accession>P0AA77</accession>
<accession>P31457</accession>
<name>DGOT_ECOL6</name>
<reference key="1">
    <citation type="journal article" date="2002" name="Proc. Natl. Acad. Sci. U.S.A.">
        <title>Extensive mosaic structure revealed by the complete genome sequence of uropathogenic Escherichia coli.</title>
        <authorList>
            <person name="Welch R.A."/>
            <person name="Burland V."/>
            <person name="Plunkett G. III"/>
            <person name="Redford P."/>
            <person name="Roesch P."/>
            <person name="Rasko D."/>
            <person name="Buckles E.L."/>
            <person name="Liou S.-R."/>
            <person name="Boutin A."/>
            <person name="Hackett J."/>
            <person name="Stroud D."/>
            <person name="Mayhew G.F."/>
            <person name="Rose D.J."/>
            <person name="Zhou S."/>
            <person name="Schwartz D.C."/>
            <person name="Perna N.T."/>
            <person name="Mobley H.L.T."/>
            <person name="Donnenberg M.S."/>
            <person name="Blattner F.R."/>
        </authorList>
    </citation>
    <scope>NUCLEOTIDE SEQUENCE [LARGE SCALE GENOMIC DNA]</scope>
    <source>
        <strain>CFT073 / ATCC 700928 / UPEC</strain>
    </source>
</reference>
<feature type="chain" id="PRO_0000121378" description="D-galactonate transporter">
    <location>
        <begin position="1"/>
        <end position="430"/>
    </location>
</feature>
<feature type="topological domain" description="Cytoplasmic" evidence="1">
    <location>
        <begin position="1"/>
        <end position="17"/>
    </location>
</feature>
<feature type="transmembrane region" description="Helical" evidence="1">
    <location>
        <begin position="18"/>
        <end position="39"/>
    </location>
</feature>
<feature type="topological domain" description="Periplasmic" evidence="1">
    <location>
        <begin position="40"/>
        <end position="50"/>
    </location>
</feature>
<feature type="transmembrane region" description="Helical" evidence="1">
    <location>
        <begin position="51"/>
        <end position="74"/>
    </location>
</feature>
<feature type="topological domain" description="Cytoplasmic" evidence="1">
    <location>
        <begin position="75"/>
        <end position="81"/>
    </location>
</feature>
<feature type="transmembrane region" description="Helical" evidence="1">
    <location>
        <begin position="82"/>
        <end position="100"/>
    </location>
</feature>
<feature type="topological domain" description="Periplasmic" evidence="1">
    <location>
        <begin position="101"/>
        <end position="103"/>
    </location>
</feature>
<feature type="transmembrane region" description="Helical" evidence="1">
    <location>
        <begin position="104"/>
        <end position="125"/>
    </location>
</feature>
<feature type="topological domain" description="Cytoplasmic" evidence="1">
    <location>
        <begin position="126"/>
        <end position="141"/>
    </location>
</feature>
<feature type="transmembrane region" description="Helical" evidence="1">
    <location>
        <begin position="142"/>
        <end position="164"/>
    </location>
</feature>
<feature type="topological domain" description="Periplasmic" evidence="1">
    <location>
        <begin position="165"/>
        <end position="168"/>
    </location>
</feature>
<feature type="transmembrane region" description="Helical" evidence="1">
    <location>
        <begin position="169"/>
        <end position="190"/>
    </location>
</feature>
<feature type="topological domain" description="Cytoplasmic" evidence="1">
    <location>
        <begin position="191"/>
        <end position="241"/>
    </location>
</feature>
<feature type="transmembrane region" description="Helical" evidence="1">
    <location>
        <begin position="242"/>
        <end position="267"/>
    </location>
</feature>
<feature type="topological domain" description="Periplasmic" evidence="1">
    <location>
        <begin position="268"/>
        <end position="276"/>
    </location>
</feature>
<feature type="transmembrane region" description="Helical" evidence="1">
    <location>
        <begin position="277"/>
        <end position="297"/>
    </location>
</feature>
<feature type="topological domain" description="Cytoplasmic" evidence="1">
    <location>
        <begin position="298"/>
        <end position="314"/>
    </location>
</feature>
<feature type="transmembrane region" description="Helical" evidence="1">
    <location>
        <begin position="315"/>
        <end position="333"/>
    </location>
</feature>
<feature type="topological domain" description="Periplasmic" evidence="1">
    <location>
        <begin position="334"/>
        <end position="336"/>
    </location>
</feature>
<feature type="transmembrane region" description="Helical" evidence="1">
    <location>
        <begin position="337"/>
        <end position="354"/>
    </location>
</feature>
<feature type="topological domain" description="Cytoplasmic" evidence="1">
    <location>
        <begin position="355"/>
        <end position="373"/>
    </location>
</feature>
<feature type="transmembrane region" description="Helical" evidence="1">
    <location>
        <begin position="374"/>
        <end position="395"/>
    </location>
</feature>
<feature type="topological domain" description="Periplasmic" evidence="1">
    <location>
        <begin position="396"/>
        <end position="400"/>
    </location>
</feature>
<feature type="transmembrane region" description="Helical" evidence="1">
    <location>
        <begin position="401"/>
        <end position="423"/>
    </location>
</feature>
<feature type="topological domain" description="Cytoplasmic" evidence="1">
    <location>
        <begin position="424"/>
        <end position="430"/>
    </location>
</feature>
<feature type="binding site" evidence="1">
    <location>
        <position position="29"/>
    </location>
    <ligand>
        <name>D-galactonate</name>
        <dbReference type="ChEBI" id="CHEBI:12931"/>
    </ligand>
</feature>
<feature type="binding site" evidence="1">
    <location>
        <position position="32"/>
    </location>
    <ligand>
        <name>D-galactonate</name>
        <dbReference type="ChEBI" id="CHEBI:12931"/>
    </ligand>
</feature>
<feature type="binding site" evidence="1">
    <location>
        <position position="64"/>
    </location>
    <ligand>
        <name>D-galactonate</name>
        <dbReference type="ChEBI" id="CHEBI:12931"/>
    </ligand>
</feature>
<feature type="binding site" evidence="1">
    <location>
        <position position="358"/>
    </location>
    <ligand>
        <name>D-galactonate</name>
        <dbReference type="ChEBI" id="CHEBI:12931"/>
    </ligand>
</feature>
<feature type="site" description="Important for transport activity" evidence="1">
    <location>
        <position position="31"/>
    </location>
</feature>
<feature type="site" description="Important for transport activity" evidence="1">
    <location>
        <position position="118"/>
    </location>
</feature>
<comment type="function">
    <text evidence="1">Involved in D-galactonate metabolism (By similarity). Catalyzes the proton-dependent uptake of galactonate into the cell (By similarity).</text>
</comment>
<comment type="catalytic activity">
    <reaction evidence="1">
        <text>D-galactonate(in) + H(+)(in) = D-galactonate(out) + H(+)(out)</text>
        <dbReference type="Rhea" id="RHEA:29835"/>
        <dbReference type="ChEBI" id="CHEBI:12931"/>
        <dbReference type="ChEBI" id="CHEBI:15378"/>
    </reaction>
    <physiologicalReaction direction="right-to-left" evidence="1">
        <dbReference type="Rhea" id="RHEA:29837"/>
    </physiologicalReaction>
</comment>
<comment type="subcellular location">
    <subcellularLocation>
        <location evidence="1">Cell inner membrane</location>
        <topology evidence="1">Multi-pass membrane protein</topology>
    </subcellularLocation>
</comment>
<comment type="similarity">
    <text evidence="2">Belongs to the major facilitator superfamily. Phthalate permease family.</text>
</comment>
<comment type="sequence caution" evidence="2">
    <conflict type="erroneous initiation">
        <sequence resource="EMBL-CDS" id="AAN83047"/>
    </conflict>
</comment>
<gene>
    <name type="primary">dgoT</name>
    <name type="ordered locus">c4612</name>
</gene>
<organism>
    <name type="scientific">Escherichia coli O6:H1 (strain CFT073 / ATCC 700928 / UPEC)</name>
    <dbReference type="NCBI Taxonomy" id="199310"/>
    <lineage>
        <taxon>Bacteria</taxon>
        <taxon>Pseudomonadati</taxon>
        <taxon>Pseudomonadota</taxon>
        <taxon>Gammaproteobacteria</taxon>
        <taxon>Enterobacterales</taxon>
        <taxon>Enterobacteriaceae</taxon>
        <taxon>Escherichia</taxon>
    </lineage>
</organism>
<keyword id="KW-0997">Cell inner membrane</keyword>
<keyword id="KW-1003">Cell membrane</keyword>
<keyword id="KW-0472">Membrane</keyword>
<keyword id="KW-1185">Reference proteome</keyword>
<keyword id="KW-0769">Symport</keyword>
<keyword id="KW-0812">Transmembrane</keyword>
<keyword id="KW-1133">Transmembrane helix</keyword>
<keyword id="KW-0813">Transport</keyword>
<protein>
    <recommendedName>
        <fullName evidence="1">D-galactonate transporter</fullName>
    </recommendedName>
    <alternativeName>
        <fullName evidence="1">D-galactonate/H(+) symporter</fullName>
    </alternativeName>
</protein>
<dbReference type="EMBL" id="AE014075">
    <property type="protein sequence ID" value="AAN83047.1"/>
    <property type="status" value="ALT_INIT"/>
    <property type="molecule type" value="Genomic_DNA"/>
</dbReference>
<dbReference type="SMR" id="P0AA77"/>
<dbReference type="STRING" id="199310.c4612"/>
<dbReference type="KEGG" id="ecc:c4612"/>
<dbReference type="eggNOG" id="COG2271">
    <property type="taxonomic scope" value="Bacteria"/>
</dbReference>
<dbReference type="HOGENOM" id="CLU_001265_5_1_6"/>
<dbReference type="Proteomes" id="UP000001410">
    <property type="component" value="Chromosome"/>
</dbReference>
<dbReference type="GO" id="GO:0005886">
    <property type="term" value="C:plasma membrane"/>
    <property type="evidence" value="ECO:0007669"/>
    <property type="project" value="UniProtKB-SubCell"/>
</dbReference>
<dbReference type="GO" id="GO:0015293">
    <property type="term" value="F:symporter activity"/>
    <property type="evidence" value="ECO:0007669"/>
    <property type="project" value="UniProtKB-KW"/>
</dbReference>
<dbReference type="CDD" id="cd17319">
    <property type="entry name" value="MFS_ExuT_GudP_like"/>
    <property type="match status" value="1"/>
</dbReference>
<dbReference type="FunFam" id="1.20.1250.20:FF:000006">
    <property type="entry name" value="MFS transporter"/>
    <property type="match status" value="1"/>
</dbReference>
<dbReference type="FunFam" id="1.20.1250.20:FF:000010">
    <property type="entry name" value="Probable glucarate transporter"/>
    <property type="match status" value="1"/>
</dbReference>
<dbReference type="Gene3D" id="1.20.1250.20">
    <property type="entry name" value="MFS general substrate transporter like domains"/>
    <property type="match status" value="2"/>
</dbReference>
<dbReference type="InterPro" id="IPR011701">
    <property type="entry name" value="MFS"/>
</dbReference>
<dbReference type="InterPro" id="IPR020846">
    <property type="entry name" value="MFS_dom"/>
</dbReference>
<dbReference type="InterPro" id="IPR050382">
    <property type="entry name" value="MFS_Na/Anion_cotransporter"/>
</dbReference>
<dbReference type="InterPro" id="IPR036259">
    <property type="entry name" value="MFS_trans_sf"/>
</dbReference>
<dbReference type="NCBIfam" id="TIGR00881">
    <property type="entry name" value="2A0104"/>
    <property type="match status" value="1"/>
</dbReference>
<dbReference type="NCBIfam" id="TIGR00893">
    <property type="entry name" value="2A0114"/>
    <property type="match status" value="1"/>
</dbReference>
<dbReference type="PANTHER" id="PTHR11662:SF333">
    <property type="entry name" value="D-GALACTONATE TRANSPORTER"/>
    <property type="match status" value="1"/>
</dbReference>
<dbReference type="PANTHER" id="PTHR11662">
    <property type="entry name" value="SOLUTE CARRIER FAMILY 17"/>
    <property type="match status" value="1"/>
</dbReference>
<dbReference type="Pfam" id="PF07690">
    <property type="entry name" value="MFS_1"/>
    <property type="match status" value="1"/>
</dbReference>
<dbReference type="SUPFAM" id="SSF103473">
    <property type="entry name" value="MFS general substrate transporter"/>
    <property type="match status" value="1"/>
</dbReference>
<dbReference type="PROSITE" id="PS50850">
    <property type="entry name" value="MFS"/>
    <property type="match status" value="1"/>
</dbReference>
<proteinExistence type="inferred from homology"/>